<comment type="function">
    <text evidence="5">Functions as an electron carrier between membrane-bound cytochrome b6-f and photosystem I in oxygenic photosynthesis.</text>
</comment>
<comment type="subunit">
    <text evidence="1 7">Monomer (By similarity). Interacts in vitro with LTO1.</text>
</comment>
<comment type="subcellular location">
    <subcellularLocation>
        <location evidence="9">Plastid</location>
        <location evidence="9">Chloroplast thylakoid lumen</location>
    </subcellularLocation>
</comment>
<comment type="PTM">
    <text>Binds 1 heme c group covalently per subunit.</text>
</comment>
<comment type="miscellaneous">
    <text>Cyt c6 and plastocyanin are functionally equivalent.</text>
</comment>
<comment type="similarity">
    <text evidence="9">Belongs to the cytochrome c family. PetJ subfamily.</text>
</comment>
<comment type="sequence caution" evidence="9">
    <conflict type="erroneous gene model prediction">
        <sequence resource="EMBL-CDS" id="BAB10887"/>
    </conflict>
</comment>
<accession>Q93VA3</accession>
<accession>Q8SKV3</accession>
<accession>Q9FL93</accession>
<dbReference type="EMBL" id="AJ438488">
    <property type="protein sequence ID" value="CAD27418.1"/>
    <property type="molecule type" value="mRNA"/>
</dbReference>
<dbReference type="EMBL" id="AB010693">
    <property type="protein sequence ID" value="BAB10887.1"/>
    <property type="status" value="ALT_SEQ"/>
    <property type="molecule type" value="Genomic_DNA"/>
</dbReference>
<dbReference type="EMBL" id="CP002688">
    <property type="protein sequence ID" value="AED95193.1"/>
    <property type="molecule type" value="Genomic_DNA"/>
</dbReference>
<dbReference type="EMBL" id="AY057729">
    <property type="protein sequence ID" value="AAL15359.1"/>
    <property type="molecule type" value="mRNA"/>
</dbReference>
<dbReference type="EMBL" id="AF372903">
    <property type="protein sequence ID" value="AAK49619.1"/>
    <property type="molecule type" value="mRNA"/>
</dbReference>
<dbReference type="RefSeq" id="NP_568640.1">
    <property type="nucleotide sequence ID" value="NM_123872.3"/>
</dbReference>
<dbReference type="PDB" id="2CE0">
    <property type="method" value="X-ray"/>
    <property type="resolution" value="1.24 A"/>
    <property type="chains" value="A=71-175"/>
</dbReference>
<dbReference type="PDB" id="2CE1">
    <property type="method" value="X-ray"/>
    <property type="resolution" value="1.40 A"/>
    <property type="chains" value="A=71-175"/>
</dbReference>
<dbReference type="PDB" id="2DGE">
    <property type="method" value="X-ray"/>
    <property type="resolution" value="1.50 A"/>
    <property type="chains" value="A/B/C/D=71-175"/>
</dbReference>
<dbReference type="PDB" id="2V07">
    <property type="method" value="X-ray"/>
    <property type="resolution" value="1.60 A"/>
    <property type="chains" value="A=71-175"/>
</dbReference>
<dbReference type="PDBsum" id="2CE0"/>
<dbReference type="PDBsum" id="2CE1"/>
<dbReference type="PDBsum" id="2DGE"/>
<dbReference type="PDBsum" id="2V07"/>
<dbReference type="SMR" id="Q93VA3"/>
<dbReference type="BioGRID" id="19784">
    <property type="interactions" value="1"/>
</dbReference>
<dbReference type="FunCoup" id="Q93VA3">
    <property type="interactions" value="41"/>
</dbReference>
<dbReference type="STRING" id="3702.Q93VA3"/>
<dbReference type="PaxDb" id="3702-AT5G45040.1"/>
<dbReference type="ProteomicsDB" id="224700"/>
<dbReference type="EnsemblPlants" id="AT5G45040.1">
    <property type="protein sequence ID" value="AT5G45040.1"/>
    <property type="gene ID" value="AT5G45040"/>
</dbReference>
<dbReference type="GeneID" id="834535"/>
<dbReference type="Gramene" id="AT5G45040.1">
    <property type="protein sequence ID" value="AT5G45040.1"/>
    <property type="gene ID" value="AT5G45040"/>
</dbReference>
<dbReference type="KEGG" id="ath:AT5G45040"/>
<dbReference type="Araport" id="AT5G45040"/>
<dbReference type="TAIR" id="AT5G45040">
    <property type="gene designation" value="CYTC6A"/>
</dbReference>
<dbReference type="eggNOG" id="ENOG502RYDY">
    <property type="taxonomic scope" value="Eukaryota"/>
</dbReference>
<dbReference type="HOGENOM" id="CLU_101159_4_0_1"/>
<dbReference type="InParanoid" id="Q93VA3"/>
<dbReference type="OMA" id="GKECMPR"/>
<dbReference type="PhylomeDB" id="Q93VA3"/>
<dbReference type="EvolutionaryTrace" id="Q93VA3"/>
<dbReference type="PRO" id="PR:Q93VA3"/>
<dbReference type="Proteomes" id="UP000006548">
    <property type="component" value="Chromosome 5"/>
</dbReference>
<dbReference type="ExpressionAtlas" id="Q93VA3">
    <property type="expression patterns" value="baseline and differential"/>
</dbReference>
<dbReference type="GO" id="GO:0009543">
    <property type="term" value="C:chloroplast thylakoid lumen"/>
    <property type="evidence" value="ECO:0007669"/>
    <property type="project" value="UniProtKB-SubCell"/>
</dbReference>
<dbReference type="GO" id="GO:0009055">
    <property type="term" value="F:electron transfer activity"/>
    <property type="evidence" value="ECO:0007669"/>
    <property type="project" value="InterPro"/>
</dbReference>
<dbReference type="GO" id="GO:0020037">
    <property type="term" value="F:heme binding"/>
    <property type="evidence" value="ECO:0007669"/>
    <property type="project" value="InterPro"/>
</dbReference>
<dbReference type="GO" id="GO:0005506">
    <property type="term" value="F:iron ion binding"/>
    <property type="evidence" value="ECO:0007669"/>
    <property type="project" value="InterPro"/>
</dbReference>
<dbReference type="GO" id="GO:0015979">
    <property type="term" value="P:photosynthesis"/>
    <property type="evidence" value="ECO:0007669"/>
    <property type="project" value="UniProtKB-KW"/>
</dbReference>
<dbReference type="FunFam" id="1.10.760.10:FF:000021">
    <property type="entry name" value="Cytochrome c6, chloroplastic"/>
    <property type="match status" value="1"/>
</dbReference>
<dbReference type="Gene3D" id="1.10.760.10">
    <property type="entry name" value="Cytochrome c-like domain"/>
    <property type="match status" value="1"/>
</dbReference>
<dbReference type="InterPro" id="IPR009056">
    <property type="entry name" value="Cyt_c-like_dom"/>
</dbReference>
<dbReference type="InterPro" id="IPR036909">
    <property type="entry name" value="Cyt_c-like_dom_sf"/>
</dbReference>
<dbReference type="InterPro" id="IPR023655">
    <property type="entry name" value="Cyt_C6"/>
</dbReference>
<dbReference type="PANTHER" id="PTHR34688">
    <property type="entry name" value="CYTOCHROME C6, CHLOROPLASTIC"/>
    <property type="match status" value="1"/>
</dbReference>
<dbReference type="PANTHER" id="PTHR34688:SF2">
    <property type="entry name" value="CYTOCHROME C6, CHLOROPLASTIC"/>
    <property type="match status" value="1"/>
</dbReference>
<dbReference type="Pfam" id="PF13442">
    <property type="entry name" value="Cytochrome_CBB3"/>
    <property type="match status" value="1"/>
</dbReference>
<dbReference type="SUPFAM" id="SSF46626">
    <property type="entry name" value="Cytochrome c"/>
    <property type="match status" value="1"/>
</dbReference>
<dbReference type="PROSITE" id="PS51007">
    <property type="entry name" value="CYTC"/>
    <property type="match status" value="1"/>
</dbReference>
<organism>
    <name type="scientific">Arabidopsis thaliana</name>
    <name type="common">Mouse-ear cress</name>
    <dbReference type="NCBI Taxonomy" id="3702"/>
    <lineage>
        <taxon>Eukaryota</taxon>
        <taxon>Viridiplantae</taxon>
        <taxon>Streptophyta</taxon>
        <taxon>Embryophyta</taxon>
        <taxon>Tracheophyta</taxon>
        <taxon>Spermatophyta</taxon>
        <taxon>Magnoliopsida</taxon>
        <taxon>eudicotyledons</taxon>
        <taxon>Gunneridae</taxon>
        <taxon>Pentapetalae</taxon>
        <taxon>rosids</taxon>
        <taxon>malvids</taxon>
        <taxon>Brassicales</taxon>
        <taxon>Brassicaceae</taxon>
        <taxon>Camelineae</taxon>
        <taxon>Arabidopsis</taxon>
    </lineage>
</organism>
<sequence length="175" mass="19210">MRLVLSGASSFTSNLFCSSQQVNGRGKELKNPISLNHNKDLDFLLKKLAPPLTAVLLAVSPICFPPESLGQTLDIQRGATLFNRACIGCHDTGGNIIQPGATLFTKDLERNGVDTEEEIYRVTYFGKGRMPGFGEKCTPRGQCTFGPRLQDEEIKLLAEFVKFQADQGWPTVSTD</sequence>
<feature type="transit peptide" description="Chloroplast" evidence="2">
    <location>
        <begin position="1"/>
        <end status="unknown"/>
    </location>
</feature>
<feature type="transit peptide" description="Thylakoid">
    <location>
        <begin status="unknown"/>
        <end position="70"/>
    </location>
</feature>
<feature type="chain" id="PRO_0000023849" description="Cytochrome c6, chloroplastic">
    <location>
        <begin position="71"/>
        <end position="175"/>
    </location>
</feature>
<feature type="binding site" description="covalent" evidence="3 4 5 6">
    <location>
        <position position="86"/>
    </location>
    <ligand>
        <name>heme c</name>
        <dbReference type="ChEBI" id="CHEBI:61717"/>
    </ligand>
</feature>
<feature type="binding site" description="covalent" evidence="3 4 5 6">
    <location>
        <position position="89"/>
    </location>
    <ligand>
        <name>heme c</name>
        <dbReference type="ChEBI" id="CHEBI:61717"/>
    </ligand>
</feature>
<feature type="binding site" description="axial binding residue">
    <location>
        <position position="90"/>
    </location>
    <ligand>
        <name>heme c</name>
        <dbReference type="ChEBI" id="CHEBI:61717"/>
    </ligand>
    <ligandPart>
        <name>Fe</name>
        <dbReference type="ChEBI" id="CHEBI:18248"/>
    </ligandPart>
</feature>
<feature type="binding site">
    <location>
        <begin position="98"/>
        <end position="102"/>
    </location>
    <ligand>
        <name>heme</name>
        <dbReference type="ChEBI" id="CHEBI:30413"/>
    </ligand>
</feature>
<feature type="binding site" description="axial binding residue">
    <location>
        <position position="130"/>
    </location>
    <ligand>
        <name>heme c</name>
        <dbReference type="ChEBI" id="CHEBI:61717"/>
    </ligand>
    <ligandPart>
        <name>Fe</name>
        <dbReference type="ChEBI" id="CHEBI:18248"/>
    </ligandPart>
</feature>
<feature type="helix" evidence="10">
    <location>
        <begin position="75"/>
        <end position="85"/>
    </location>
</feature>
<feature type="turn" evidence="10">
    <location>
        <begin position="86"/>
        <end position="89"/>
    </location>
</feature>
<feature type="helix" evidence="10">
    <location>
        <begin position="91"/>
        <end position="93"/>
    </location>
</feature>
<feature type="strand" evidence="10">
    <location>
        <begin position="96"/>
        <end position="98"/>
    </location>
</feature>
<feature type="helix" evidence="10">
    <location>
        <begin position="105"/>
        <end position="110"/>
    </location>
</feature>
<feature type="helix" evidence="10">
    <location>
        <begin position="116"/>
        <end position="125"/>
    </location>
</feature>
<feature type="strand" evidence="11">
    <location>
        <begin position="130"/>
        <end position="132"/>
    </location>
</feature>
<feature type="helix" evidence="10">
    <location>
        <begin position="140"/>
        <end position="142"/>
    </location>
</feature>
<feature type="helix" evidence="10">
    <location>
        <begin position="151"/>
        <end position="167"/>
    </location>
</feature>
<proteinExistence type="evidence at protein level"/>
<keyword id="KW-0002">3D-structure</keyword>
<keyword id="KW-0150">Chloroplast</keyword>
<keyword id="KW-0249">Electron transport</keyword>
<keyword id="KW-0349">Heme</keyword>
<keyword id="KW-0408">Iron</keyword>
<keyword id="KW-0479">Metal-binding</keyword>
<keyword id="KW-0602">Photosynthesis</keyword>
<keyword id="KW-0934">Plastid</keyword>
<keyword id="KW-1185">Reference proteome</keyword>
<keyword id="KW-0793">Thylakoid</keyword>
<keyword id="KW-0809">Transit peptide</keyword>
<keyword id="KW-0813">Transport</keyword>
<gene>
    <name type="primary">PETJ</name>
    <name type="ordered locus">At5g45040</name>
    <name type="ORF">K21C13.23</name>
</gene>
<name>CYC6_ARATH</name>
<evidence type="ECO:0000250" key="1"/>
<evidence type="ECO:0000255" key="2"/>
<evidence type="ECO:0000255" key="3">
    <source>
        <dbReference type="PROSITE-ProRule" id="PRU00433"/>
    </source>
</evidence>
<evidence type="ECO:0000269" key="4">
    <source>
    </source>
</evidence>
<evidence type="ECO:0000269" key="5">
    <source>
    </source>
</evidence>
<evidence type="ECO:0000269" key="6">
    <source>
    </source>
</evidence>
<evidence type="ECO:0000269" key="7">
    <source>
    </source>
</evidence>
<evidence type="ECO:0000303" key="8">
    <source>
    </source>
</evidence>
<evidence type="ECO:0000305" key="9"/>
<evidence type="ECO:0007829" key="10">
    <source>
        <dbReference type="PDB" id="2CE0"/>
    </source>
</evidence>
<evidence type="ECO:0007829" key="11">
    <source>
        <dbReference type="PDB" id="2CE1"/>
    </source>
</evidence>
<protein>
    <recommendedName>
        <fullName evidence="8">Cytochrome c6, chloroplastic</fullName>
    </recommendedName>
    <alternativeName>
        <fullName>Cytochrome c-552</fullName>
        <shortName evidence="8">Atc6</shortName>
    </alternativeName>
    <alternativeName>
        <fullName>Cytochrome c-553</fullName>
    </alternativeName>
    <alternativeName>
        <fullName>Cytochrome c553</fullName>
    </alternativeName>
    <alternativeName>
        <fullName>Soluble cytochrome f</fullName>
    </alternativeName>
</protein>
<reference key="1">
    <citation type="journal article" date="2002" name="Nature">
        <title>Functional relationship of cytochrome c6 and plastocyanin in Arabidopsis.</title>
        <authorList>
            <person name="Gupta R."/>
            <person name="He Z."/>
            <person name="Luan S."/>
        </authorList>
    </citation>
    <scope>NUCLEOTIDE SEQUENCE [MRNA]</scope>
    <source>
        <strain>cv. Columbia</strain>
    </source>
</reference>
<reference key="2">
    <citation type="journal article" date="1998" name="DNA Res.">
        <title>Structural analysis of Arabidopsis thaliana chromosome 5. V. Sequence features of the regions of 1,381,565 bp covered by twenty one physically assigned P1 and TAC clones.</title>
        <authorList>
            <person name="Kaneko T."/>
            <person name="Kotani H."/>
            <person name="Nakamura Y."/>
            <person name="Sato S."/>
            <person name="Asamizu E."/>
            <person name="Miyajima N."/>
            <person name="Tabata S."/>
        </authorList>
    </citation>
    <scope>NUCLEOTIDE SEQUENCE [LARGE SCALE GENOMIC DNA]</scope>
    <source>
        <strain>cv. Columbia</strain>
    </source>
</reference>
<reference key="3">
    <citation type="journal article" date="2017" name="Plant J.">
        <title>Araport11: a complete reannotation of the Arabidopsis thaliana reference genome.</title>
        <authorList>
            <person name="Cheng C.Y."/>
            <person name="Krishnakumar V."/>
            <person name="Chan A.P."/>
            <person name="Thibaud-Nissen F."/>
            <person name="Schobel S."/>
            <person name="Town C.D."/>
        </authorList>
    </citation>
    <scope>GENOME REANNOTATION</scope>
    <source>
        <strain>cv. Columbia</strain>
    </source>
</reference>
<reference key="4">
    <citation type="journal article" date="2003" name="Science">
        <title>Empirical analysis of transcriptional activity in the Arabidopsis genome.</title>
        <authorList>
            <person name="Yamada K."/>
            <person name="Lim J."/>
            <person name="Dale J.M."/>
            <person name="Chen H."/>
            <person name="Shinn P."/>
            <person name="Palm C.J."/>
            <person name="Southwick A.M."/>
            <person name="Wu H.C."/>
            <person name="Kim C.J."/>
            <person name="Nguyen M."/>
            <person name="Pham P.K."/>
            <person name="Cheuk R.F."/>
            <person name="Karlin-Newmann G."/>
            <person name="Liu S.X."/>
            <person name="Lam B."/>
            <person name="Sakano H."/>
            <person name="Wu T."/>
            <person name="Yu G."/>
            <person name="Miranda M."/>
            <person name="Quach H.L."/>
            <person name="Tripp M."/>
            <person name="Chang C.H."/>
            <person name="Lee J.M."/>
            <person name="Toriumi M.J."/>
            <person name="Chan M.M."/>
            <person name="Tang C.C."/>
            <person name="Onodera C.S."/>
            <person name="Deng J.M."/>
            <person name="Akiyama K."/>
            <person name="Ansari Y."/>
            <person name="Arakawa T."/>
            <person name="Banh J."/>
            <person name="Banno F."/>
            <person name="Bowser L."/>
            <person name="Brooks S.Y."/>
            <person name="Carninci P."/>
            <person name="Chao Q."/>
            <person name="Choy N."/>
            <person name="Enju A."/>
            <person name="Goldsmith A.D."/>
            <person name="Gurjal M."/>
            <person name="Hansen N.F."/>
            <person name="Hayashizaki Y."/>
            <person name="Johnson-Hopson C."/>
            <person name="Hsuan V.W."/>
            <person name="Iida K."/>
            <person name="Karnes M."/>
            <person name="Khan S."/>
            <person name="Koesema E."/>
            <person name="Ishida J."/>
            <person name="Jiang P.X."/>
            <person name="Jones T."/>
            <person name="Kawai J."/>
            <person name="Kamiya A."/>
            <person name="Meyers C."/>
            <person name="Nakajima M."/>
            <person name="Narusaka M."/>
            <person name="Seki M."/>
            <person name="Sakurai T."/>
            <person name="Satou M."/>
            <person name="Tamse R."/>
            <person name="Vaysberg M."/>
            <person name="Wallender E.K."/>
            <person name="Wong C."/>
            <person name="Yamamura Y."/>
            <person name="Yuan S."/>
            <person name="Shinozaki K."/>
            <person name="Davis R.W."/>
            <person name="Theologis A."/>
            <person name="Ecker J.R."/>
        </authorList>
    </citation>
    <scope>NUCLEOTIDE SEQUENCE [LARGE SCALE MRNA]</scope>
    <source>
        <strain>cv. Columbia</strain>
    </source>
</reference>
<reference key="5">
    <citation type="journal article" date="2006" name="FEBS Lett.">
        <title>Crystal structure of oxidized cytochrome c(6A) from Arabidopsis thaliana.</title>
        <authorList>
            <person name="Chida H."/>
            <person name="Yokoyama T."/>
            <person name="Kawai F."/>
            <person name="Nakazawa A."/>
            <person name="Akazaki H."/>
            <person name="Takayama Y."/>
            <person name="Hirano T."/>
            <person name="Suruga K."/>
            <person name="Satoh T."/>
            <person name="Yamada S."/>
            <person name="Kawachi R."/>
            <person name="Unzai S."/>
            <person name="Nishio T."/>
            <person name="Park S.-Y."/>
            <person name="Oku T."/>
        </authorList>
    </citation>
    <scope>X-RAY CRYSTALLOGRAPHY (1.5 ANGSTROMS) OF 71-175 IN COMPLEX WITH HEME</scope>
</reference>
<reference key="6">
    <citation type="journal article" date="2006" name="J. Mol. Biol.">
        <title>Structure of cytochrome c(6A), a novel dithio-cytochrome of Arabidopsis thaliana, and its reactivity with plastocyanin: implications for function.</title>
        <authorList>
            <person name="Marcaida M.J."/>
            <person name="Schlarb-Ridley B.G."/>
            <person name="Worrall J.A.R."/>
            <person name="Wastl J."/>
            <person name="Evans T.J."/>
            <person name="Bendall D.S."/>
            <person name="Luisi B.F."/>
            <person name="Howe C.J."/>
        </authorList>
    </citation>
    <scope>X-RAY CRYSTALLOGRAPHY (1.24 ANGSTROMS) OF 71-175 IN COMPLEX WITH HEME</scope>
    <scope>FUNCTION</scope>
</reference>
<reference key="7">
    <citation type="journal article" date="2014" name="Protein Pept. Lett.">
        <title>Identification of potential targets for thylakoid oxidoreductase AtVKOR/LTO1 in chloroplasts.</title>
        <authorList>
            <person name="Lu Y."/>
            <person name="Du J.J."/>
            <person name="Yu Z.B."/>
            <person name="Peng J.J."/>
            <person name="Xu J.N."/>
            <person name="Wang X.Y."/>
        </authorList>
    </citation>
    <scope>INTERACTION WITH LTO1</scope>
</reference>
<reference key="8">
    <citation type="journal article" date="2007" name="J. Am. Chem. Soc.">
        <title>Modulation of heme redox potential in the cytochrome c6 family.</title>
        <authorList>
            <person name="Worrall J.A.R."/>
            <person name="Schlarb-Ridley B.G."/>
            <person name="Reda T."/>
            <person name="Marcaida M.J."/>
            <person name="Moorlen R.J."/>
            <person name="Wastl J."/>
            <person name="Hirst J."/>
            <person name="Bendall D.S."/>
            <person name="Luisi B.F."/>
            <person name="Howe C.J."/>
        </authorList>
    </citation>
    <scope>X-RAY CRYSTALLOGRAPHY (1.6 ANGSTROMS) OF 71-175 IN COMPLEX WITH HEME</scope>
</reference>